<name>ICEN_PSEFL</name>
<keyword id="KW-0998">Cell outer membrane</keyword>
<keyword id="KW-0387">Ice nucleation</keyword>
<keyword id="KW-0472">Membrane</keyword>
<keyword id="KW-0677">Repeat</keyword>
<accession>P09815</accession>
<protein>
    <recommendedName>
        <fullName>Ice nucleation protein</fullName>
    </recommendedName>
</protein>
<sequence>MKSEKVLVLRTCANNMTDHCGLVWPILGLVECKFWEPTIKLENGLTGALWGQGSSAQLSMNADAKWVVCEVTMGDLIFLENNEGVKFPRAEVVHVGTRSSALGYISDNVSKHEACSSNLIEKFTFSDVKSETRNISPALPVTVDNMPNGVNRSTTVRNTQTLETAVYGSTLTGANQSQLIAGYGSTETAGDSSTLIAGYGSTGTSGSDSSIIAGYGSTGTAGSDSSLIAGYGSTQTAGGDSSLTAGYGSTQTAQVGSNLTAGYGSTGTAGPDSSLIAGYGSTQTAGGESSLTAGYGSTQTAQVGSDLTAGYGSTGTAGSDSSLIAGYGSTQTAGGDSSLTAGYGSTQTAQVGSNLTAGYGSTGTAGPDSSLIAGYGSTQTAGGESSLTAGYGSTQTAQVGSDLTAGYGSTGTAGSDSSLIAGYGSTQTAGGESSLTAGYGSTQTAQVGSDLTAGYGSTGTAGSDSSLIAGYGSTQTAGGDSSLTAGYGSTQTAQVGSDLTAGYGSTGTAGSDSSLIAGYGSTQTAGGDSSLTAGYGSTQTAQVGSDLTAGYGSTGTAGSDSSLIAGYGSTQTAGGDSSLTAGYGSTQTAQMGSNLTAGYGSTGTAGSDSSLIAGYGSTQTAGGDSSLTAGYGSTQTAGHGSILTAGYGSTQTAQEGSSLTAGYGSTSTAGPESSLIAGYGSTQTAGHESTLTAGYGSTQTAQEDSSLTAGYGSTSTAGFNSSLIAGYGSTQTSGYESILTAGYGSTQTAQDNSSLTTGYGSTSTAGYQSSLIAGYGSTQTAGYESTLTAGYGSCQTAQEQSWLTTGYGSTSTAGYESRLIAGYGSTQTAGYKSILTAGYGSTQTAQEESSLTAGYGSTSTAGYASSLIAGYGSTQTAGYDSILTAGYGSTLTALDSSTLTAGYGSTETAGFGSSLMAGYGSSQIAGYGSTLTAGYGSTQMAERDSTLTAGYGSTGTAGQDSSLIAGYGSSLTSGMRSYLTAGYGSTLISGLQSVLTAGYGSSLTSGIRSSLTAGYGSNQIASHKSSLIAGHESTQIAGHKSMLIAGKGSSQTAGSRSTLIAGANSVQMAGDRSRLTAGANSIQTAGDRSKLLAGSNSYLTAGDRSKLTAGDDCVLMAGDRSKLTAGKNCVLTAGADSRLIGSLGSTLSGGENSTLIFRCWDGKRYTNVVVKTGTDEVEADVPYQIDEDSNVLIKAEDNSDTPVDQSQIQP</sequence>
<comment type="function">
    <text>Ice nucleation proteins enable bacteria to nucleate crystallization in supercooled water.</text>
</comment>
<comment type="subcellular location">
    <subcellularLocation>
        <location evidence="1">Cell outer membrane</location>
        <topology evidence="1">Peripheral membrane protein</topology>
    </subcellularLocation>
</comment>
<comment type="domain">
    <text>Contains 122 imperfect repeats of a consensus octapeptide A-G-Y-G-S-T-L-T; further on a 16-residue and a regional 48-residue periodicity is superimposed.</text>
</comment>
<comment type="miscellaneous">
    <text>A structural model is suggested in which the ice nucleation protein displays a symmetry related to that of ice.</text>
</comment>
<comment type="similarity">
    <text evidence="2">Belongs to the bacterial ice nucleation protein family.</text>
</comment>
<reference key="1">
    <citation type="journal article" date="1986" name="Nucleic Acids Res.">
        <title>Conserved repeats in diverged ice nucleation structural genes from two species of Pseudomonas.</title>
        <authorList>
            <person name="Warren G.J."/>
            <person name="Corotto L."/>
            <person name="Wolber P."/>
        </authorList>
    </citation>
    <scope>NUCLEOTIDE SEQUENCE [GENOMIC DNA]</scope>
</reference>
<dbReference type="EMBL" id="X04501">
    <property type="protein sequence ID" value="CAA28186.1"/>
    <property type="molecule type" value="Genomic_DNA"/>
</dbReference>
<dbReference type="PIR" id="A25547">
    <property type="entry name" value="A25547"/>
</dbReference>
<dbReference type="GO" id="GO:0009279">
    <property type="term" value="C:cell outer membrane"/>
    <property type="evidence" value="ECO:0007669"/>
    <property type="project" value="UniProtKB-SubCell"/>
</dbReference>
<dbReference type="GO" id="GO:0050825">
    <property type="term" value="F:ice binding"/>
    <property type="evidence" value="ECO:0007669"/>
    <property type="project" value="UniProtKB-KW"/>
</dbReference>
<dbReference type="InterPro" id="IPR000258">
    <property type="entry name" value="Ice_nucleatn"/>
</dbReference>
<dbReference type="PANTHER" id="PTHR31294">
    <property type="match status" value="1"/>
</dbReference>
<dbReference type="PANTHER" id="PTHR31294:SF8">
    <property type="entry name" value="KERATIN-ASSOCIATED PROTEIN 21-1-RELATED"/>
    <property type="match status" value="1"/>
</dbReference>
<dbReference type="Pfam" id="PF00818">
    <property type="entry name" value="Ice_nucleation"/>
    <property type="match status" value="33"/>
</dbReference>
<dbReference type="PRINTS" id="PR00327">
    <property type="entry name" value="ICENUCLEATN"/>
</dbReference>
<dbReference type="SUPFAM" id="SSF69349">
    <property type="entry name" value="Phage fibre proteins"/>
    <property type="match status" value="8"/>
</dbReference>
<dbReference type="PROSITE" id="PS00314">
    <property type="entry name" value="ICE_NUCLEATION"/>
    <property type="match status" value="45"/>
</dbReference>
<evidence type="ECO:0000250" key="1"/>
<evidence type="ECO:0000305" key="2"/>
<feature type="chain" id="PRO_0000204023" description="Ice nucleation protein">
    <location>
        <begin position="1"/>
        <end position="1210"/>
    </location>
</feature>
<feature type="region of interest" description="Octapeptide periodicity">
    <location>
        <begin position="165"/>
        <end position="1156"/>
    </location>
</feature>
<organism>
    <name type="scientific">Pseudomonas fluorescens</name>
    <dbReference type="NCBI Taxonomy" id="294"/>
    <lineage>
        <taxon>Bacteria</taxon>
        <taxon>Pseudomonadati</taxon>
        <taxon>Pseudomonadota</taxon>
        <taxon>Gammaproteobacteria</taxon>
        <taxon>Pseudomonadales</taxon>
        <taxon>Pseudomonadaceae</taxon>
        <taxon>Pseudomonas</taxon>
    </lineage>
</organism>
<gene>
    <name type="primary">inaW</name>
</gene>
<proteinExistence type="inferred from homology"/>